<protein>
    <recommendedName>
        <fullName evidence="1">NAD(P)H-quinone oxidoreductase subunit L</fullName>
        <ecNumber evidence="1">7.1.1.-</ecNumber>
    </recommendedName>
    <alternativeName>
        <fullName evidence="1">NAD(P)H dehydrogenase I subunit L</fullName>
    </alternativeName>
    <alternativeName>
        <fullName>NDH-1 subunit L</fullName>
    </alternativeName>
    <alternativeName>
        <fullName>NDH-L</fullName>
    </alternativeName>
</protein>
<comment type="function">
    <text evidence="1">NDH-1 shuttles electrons from an unknown electron donor, via FMN and iron-sulfur (Fe-S) centers, to quinones in the respiratory and/or the photosynthetic chain. The immediate electron acceptor for the enzyme in this species is believed to be plastoquinone. Couples the redox reaction to proton translocation, and thus conserves the redox energy in a proton gradient. Cyanobacterial NDH-1 also plays a role in inorganic carbon-concentration.</text>
</comment>
<comment type="catalytic activity">
    <reaction evidence="1">
        <text>a plastoquinone + NADH + (n+1) H(+)(in) = a plastoquinol + NAD(+) + n H(+)(out)</text>
        <dbReference type="Rhea" id="RHEA:42608"/>
        <dbReference type="Rhea" id="RHEA-COMP:9561"/>
        <dbReference type="Rhea" id="RHEA-COMP:9562"/>
        <dbReference type="ChEBI" id="CHEBI:15378"/>
        <dbReference type="ChEBI" id="CHEBI:17757"/>
        <dbReference type="ChEBI" id="CHEBI:57540"/>
        <dbReference type="ChEBI" id="CHEBI:57945"/>
        <dbReference type="ChEBI" id="CHEBI:62192"/>
    </reaction>
</comment>
<comment type="catalytic activity">
    <reaction evidence="1">
        <text>a plastoquinone + NADPH + (n+1) H(+)(in) = a plastoquinol + NADP(+) + n H(+)(out)</text>
        <dbReference type="Rhea" id="RHEA:42612"/>
        <dbReference type="Rhea" id="RHEA-COMP:9561"/>
        <dbReference type="Rhea" id="RHEA-COMP:9562"/>
        <dbReference type="ChEBI" id="CHEBI:15378"/>
        <dbReference type="ChEBI" id="CHEBI:17757"/>
        <dbReference type="ChEBI" id="CHEBI:57783"/>
        <dbReference type="ChEBI" id="CHEBI:58349"/>
        <dbReference type="ChEBI" id="CHEBI:62192"/>
    </reaction>
</comment>
<comment type="subunit">
    <text evidence="1">NDH-1 can be composed of about 15 different subunits; different subcomplexes with different compositions have been identified which probably have different functions.</text>
</comment>
<comment type="subcellular location">
    <subcellularLocation>
        <location evidence="1">Cellular thylakoid membrane</location>
        <topology evidence="1">Multi-pass membrane protein</topology>
    </subcellularLocation>
</comment>
<comment type="similarity">
    <text evidence="1">Belongs to the complex I NdhL subunit family.</text>
</comment>
<keyword id="KW-0472">Membrane</keyword>
<keyword id="KW-0520">NAD</keyword>
<keyword id="KW-0521">NADP</keyword>
<keyword id="KW-0618">Plastoquinone</keyword>
<keyword id="KW-0874">Quinone</keyword>
<keyword id="KW-0793">Thylakoid</keyword>
<keyword id="KW-1278">Translocase</keyword>
<keyword id="KW-0812">Transmembrane</keyword>
<keyword id="KW-1133">Transmembrane helix</keyword>
<keyword id="KW-0813">Transport</keyword>
<sequence>MESFFNNSFATLIAYMGVITIYLLVIPLLLFYWMNNRWHVMGKYERLGIYGLVFLFFPGLILFSPFLNLRLKGSGKG</sequence>
<organism>
    <name type="scientific">Prochlorococcus marinus (strain MIT 9312)</name>
    <dbReference type="NCBI Taxonomy" id="74546"/>
    <lineage>
        <taxon>Bacteria</taxon>
        <taxon>Bacillati</taxon>
        <taxon>Cyanobacteriota</taxon>
        <taxon>Cyanophyceae</taxon>
        <taxon>Synechococcales</taxon>
        <taxon>Prochlorococcaceae</taxon>
        <taxon>Prochlorococcus</taxon>
    </lineage>
</organism>
<reference key="1">
    <citation type="journal article" date="2006" name="Science">
        <title>Genomic islands and the ecology and evolution of Prochlorococcus.</title>
        <authorList>
            <person name="Coleman M.L."/>
            <person name="Sullivan M.B."/>
            <person name="Martiny A.C."/>
            <person name="Steglich C."/>
            <person name="Barry K."/>
            <person name="Delong E.F."/>
            <person name="Chisholm S.W."/>
        </authorList>
    </citation>
    <scope>NUCLEOTIDE SEQUENCE [LARGE SCALE GENOMIC DNA]</scope>
    <source>
        <strain>MIT 9312</strain>
    </source>
</reference>
<evidence type="ECO:0000255" key="1">
    <source>
        <dbReference type="HAMAP-Rule" id="MF_01355"/>
    </source>
</evidence>
<gene>
    <name evidence="1" type="primary">ndhL</name>
    <name type="ordered locus">PMT9312_0570</name>
</gene>
<name>NDHL_PROM9</name>
<dbReference type="EC" id="7.1.1.-" evidence="1"/>
<dbReference type="EMBL" id="CP000111">
    <property type="protein sequence ID" value="ABB49631.1"/>
    <property type="molecule type" value="Genomic_DNA"/>
</dbReference>
<dbReference type="RefSeq" id="WP_011376126.1">
    <property type="nucleotide sequence ID" value="NC_007577.1"/>
</dbReference>
<dbReference type="SMR" id="Q31BW4"/>
<dbReference type="STRING" id="74546.PMT9312_0570"/>
<dbReference type="KEGG" id="pmi:PMT9312_0570"/>
<dbReference type="eggNOG" id="ENOG5030RAT">
    <property type="taxonomic scope" value="Bacteria"/>
</dbReference>
<dbReference type="HOGENOM" id="CLU_171077_1_0_3"/>
<dbReference type="OrthoDB" id="517549at2"/>
<dbReference type="Proteomes" id="UP000002715">
    <property type="component" value="Chromosome"/>
</dbReference>
<dbReference type="GO" id="GO:0031676">
    <property type="term" value="C:plasma membrane-derived thylakoid membrane"/>
    <property type="evidence" value="ECO:0007669"/>
    <property type="project" value="UniProtKB-SubCell"/>
</dbReference>
<dbReference type="GO" id="GO:0016655">
    <property type="term" value="F:oxidoreductase activity, acting on NAD(P)H, quinone or similar compound as acceptor"/>
    <property type="evidence" value="ECO:0007669"/>
    <property type="project" value="UniProtKB-UniRule"/>
</dbReference>
<dbReference type="GO" id="GO:0048038">
    <property type="term" value="F:quinone binding"/>
    <property type="evidence" value="ECO:0007669"/>
    <property type="project" value="UniProtKB-KW"/>
</dbReference>
<dbReference type="HAMAP" id="MF_01355">
    <property type="entry name" value="NDH1_NDH1L"/>
    <property type="match status" value="1"/>
</dbReference>
<dbReference type="InterPro" id="IPR019654">
    <property type="entry name" value="NADH-quinone_OxRdatse_su_L"/>
</dbReference>
<dbReference type="Pfam" id="PF10716">
    <property type="entry name" value="NdhL"/>
    <property type="match status" value="1"/>
</dbReference>
<proteinExistence type="inferred from homology"/>
<feature type="chain" id="PRO_0000353677" description="NAD(P)H-quinone oxidoreductase subunit L">
    <location>
        <begin position="1"/>
        <end position="77"/>
    </location>
</feature>
<feature type="transmembrane region" description="Helical" evidence="1">
    <location>
        <begin position="12"/>
        <end position="32"/>
    </location>
</feature>
<feature type="transmembrane region" description="Helical" evidence="1">
    <location>
        <begin position="47"/>
        <end position="67"/>
    </location>
</feature>
<accession>Q31BW4</accession>